<gene>
    <name evidence="1" type="primary">infC</name>
    <name type="ordered locus">BA_4819</name>
    <name type="ordered locus">GBAA_4819</name>
    <name type="ordered locus">BAS4471</name>
</gene>
<organism>
    <name type="scientific">Bacillus anthracis</name>
    <dbReference type="NCBI Taxonomy" id="1392"/>
    <lineage>
        <taxon>Bacteria</taxon>
        <taxon>Bacillati</taxon>
        <taxon>Bacillota</taxon>
        <taxon>Bacilli</taxon>
        <taxon>Bacillales</taxon>
        <taxon>Bacillaceae</taxon>
        <taxon>Bacillus</taxon>
        <taxon>Bacillus cereus group</taxon>
    </lineage>
</organism>
<proteinExistence type="inferred from homology"/>
<protein>
    <recommendedName>
        <fullName evidence="1">Translation initiation factor IF-3</fullName>
    </recommendedName>
</protein>
<keyword id="KW-0963">Cytoplasm</keyword>
<keyword id="KW-0396">Initiation factor</keyword>
<keyword id="KW-0648">Protein biosynthesis</keyword>
<keyword id="KW-1185">Reference proteome</keyword>
<sequence length="167" mass="19080">MMINEQIRAREVRLVGANGDQLGIKSRNDALDLAANLNLDLVLVAPNAKPPVCRIMDYGKFRFEQQKKEKEQRKNQKVISMKEVRLSPTIDEHDFNTKLRNAIKFLEKGDKVKASIRFKGRAITHKEIGQRVLDRFSEACAEVSTIESKPKMEGRSMFLVLAPKNDK</sequence>
<accession>Q81L15</accession>
<accession>Q6HSH0</accession>
<accession>Q6KLR5</accession>
<name>IF3_BACAN</name>
<evidence type="ECO:0000255" key="1">
    <source>
        <dbReference type="HAMAP-Rule" id="MF_00080"/>
    </source>
</evidence>
<evidence type="ECO:0000305" key="2"/>
<dbReference type="EMBL" id="AE016879">
    <property type="protein sequence ID" value="AAP28508.1"/>
    <property type="status" value="ALT_INIT"/>
    <property type="molecule type" value="Genomic_DNA"/>
</dbReference>
<dbReference type="EMBL" id="AE017334">
    <property type="protein sequence ID" value="AAT33940.2"/>
    <property type="status" value="ALT_INIT"/>
    <property type="molecule type" value="Genomic_DNA"/>
</dbReference>
<dbReference type="EMBL" id="AE017225">
    <property type="protein sequence ID" value="AAT56769.1"/>
    <property type="status" value="ALT_INIT"/>
    <property type="molecule type" value="Genomic_DNA"/>
</dbReference>
<dbReference type="RefSeq" id="NP_847022.1">
    <property type="nucleotide sequence ID" value="NC_003997.3"/>
</dbReference>
<dbReference type="SMR" id="Q81L15"/>
<dbReference type="IntAct" id="Q81L15">
    <property type="interactions" value="1"/>
</dbReference>
<dbReference type="STRING" id="261594.GBAA_4819"/>
<dbReference type="DNASU" id="1083958"/>
<dbReference type="KEGG" id="ban:BA_4819"/>
<dbReference type="KEGG" id="bar:GBAA_4819"/>
<dbReference type="KEGG" id="bat:BAS4471"/>
<dbReference type="PATRIC" id="fig|1392.236.peg.4968"/>
<dbReference type="eggNOG" id="COG0290">
    <property type="taxonomic scope" value="Bacteria"/>
</dbReference>
<dbReference type="HOGENOM" id="CLU_054919_3_2_9"/>
<dbReference type="OMA" id="KCTVIFR"/>
<dbReference type="Proteomes" id="UP000000427">
    <property type="component" value="Chromosome"/>
</dbReference>
<dbReference type="Proteomes" id="UP000000594">
    <property type="component" value="Chromosome"/>
</dbReference>
<dbReference type="GO" id="GO:0005829">
    <property type="term" value="C:cytosol"/>
    <property type="evidence" value="ECO:0007669"/>
    <property type="project" value="TreeGrafter"/>
</dbReference>
<dbReference type="GO" id="GO:0016020">
    <property type="term" value="C:membrane"/>
    <property type="evidence" value="ECO:0007669"/>
    <property type="project" value="TreeGrafter"/>
</dbReference>
<dbReference type="GO" id="GO:0043022">
    <property type="term" value="F:ribosome binding"/>
    <property type="evidence" value="ECO:0007669"/>
    <property type="project" value="TreeGrafter"/>
</dbReference>
<dbReference type="GO" id="GO:0003743">
    <property type="term" value="F:translation initiation factor activity"/>
    <property type="evidence" value="ECO:0007669"/>
    <property type="project" value="UniProtKB-UniRule"/>
</dbReference>
<dbReference type="GO" id="GO:0032790">
    <property type="term" value="P:ribosome disassembly"/>
    <property type="evidence" value="ECO:0007669"/>
    <property type="project" value="TreeGrafter"/>
</dbReference>
<dbReference type="FunFam" id="3.10.20.80:FF:000001">
    <property type="entry name" value="Translation initiation factor IF-3"/>
    <property type="match status" value="1"/>
</dbReference>
<dbReference type="FunFam" id="3.30.110.10:FF:000001">
    <property type="entry name" value="Translation initiation factor IF-3"/>
    <property type="match status" value="1"/>
</dbReference>
<dbReference type="Gene3D" id="3.30.110.10">
    <property type="entry name" value="Translation initiation factor 3 (IF-3), C-terminal domain"/>
    <property type="match status" value="1"/>
</dbReference>
<dbReference type="Gene3D" id="3.10.20.80">
    <property type="entry name" value="Translation initiation factor 3 (IF-3), N-terminal domain"/>
    <property type="match status" value="1"/>
</dbReference>
<dbReference type="HAMAP" id="MF_00080">
    <property type="entry name" value="IF_3"/>
    <property type="match status" value="1"/>
</dbReference>
<dbReference type="InterPro" id="IPR036788">
    <property type="entry name" value="T_IF-3_C_sf"/>
</dbReference>
<dbReference type="InterPro" id="IPR036787">
    <property type="entry name" value="T_IF-3_N_sf"/>
</dbReference>
<dbReference type="InterPro" id="IPR019813">
    <property type="entry name" value="Translation_initiation_fac3_CS"/>
</dbReference>
<dbReference type="InterPro" id="IPR001288">
    <property type="entry name" value="Translation_initiation_fac_3"/>
</dbReference>
<dbReference type="InterPro" id="IPR019815">
    <property type="entry name" value="Translation_initiation_fac_3_C"/>
</dbReference>
<dbReference type="InterPro" id="IPR019814">
    <property type="entry name" value="Translation_initiation_fac_3_N"/>
</dbReference>
<dbReference type="NCBIfam" id="TIGR00168">
    <property type="entry name" value="infC"/>
    <property type="match status" value="1"/>
</dbReference>
<dbReference type="PANTHER" id="PTHR10938">
    <property type="entry name" value="TRANSLATION INITIATION FACTOR IF-3"/>
    <property type="match status" value="1"/>
</dbReference>
<dbReference type="PANTHER" id="PTHR10938:SF0">
    <property type="entry name" value="TRANSLATION INITIATION FACTOR IF-3, MITOCHONDRIAL"/>
    <property type="match status" value="1"/>
</dbReference>
<dbReference type="Pfam" id="PF00707">
    <property type="entry name" value="IF3_C"/>
    <property type="match status" value="1"/>
</dbReference>
<dbReference type="Pfam" id="PF05198">
    <property type="entry name" value="IF3_N"/>
    <property type="match status" value="1"/>
</dbReference>
<dbReference type="SUPFAM" id="SSF55200">
    <property type="entry name" value="Translation initiation factor IF3, C-terminal domain"/>
    <property type="match status" value="1"/>
</dbReference>
<dbReference type="SUPFAM" id="SSF54364">
    <property type="entry name" value="Translation initiation factor IF3, N-terminal domain"/>
    <property type="match status" value="1"/>
</dbReference>
<dbReference type="PROSITE" id="PS00938">
    <property type="entry name" value="IF3"/>
    <property type="match status" value="1"/>
</dbReference>
<feature type="chain" id="PRO_0000177475" description="Translation initiation factor IF-3">
    <location>
        <begin position="1"/>
        <end position="167"/>
    </location>
</feature>
<comment type="function">
    <text evidence="1">IF-3 binds to the 30S ribosomal subunit and shifts the equilibrium between 70S ribosomes and their 50S and 30S subunits in favor of the free subunits, thus enhancing the availability of 30S subunits on which protein synthesis initiation begins.</text>
</comment>
<comment type="subunit">
    <text evidence="1">Monomer.</text>
</comment>
<comment type="subcellular location">
    <subcellularLocation>
        <location evidence="1">Cytoplasm</location>
    </subcellularLocation>
</comment>
<comment type="similarity">
    <text evidence="1">Belongs to the IF-3 family.</text>
</comment>
<comment type="sequence caution" evidence="2">
    <conflict type="erroneous initiation">
        <sequence resource="EMBL-CDS" id="AAP28508"/>
    </conflict>
</comment>
<comment type="sequence caution" evidence="2">
    <conflict type="erroneous initiation">
        <sequence resource="EMBL-CDS" id="AAT33940"/>
    </conflict>
</comment>
<comment type="sequence caution" evidence="2">
    <conflict type="erroneous initiation">
        <sequence resource="EMBL-CDS" id="AAT56769"/>
    </conflict>
</comment>
<reference key="1">
    <citation type="journal article" date="2003" name="Nature">
        <title>The genome sequence of Bacillus anthracis Ames and comparison to closely related bacteria.</title>
        <authorList>
            <person name="Read T.D."/>
            <person name="Peterson S.N."/>
            <person name="Tourasse N.J."/>
            <person name="Baillie L.W."/>
            <person name="Paulsen I.T."/>
            <person name="Nelson K.E."/>
            <person name="Tettelin H."/>
            <person name="Fouts D.E."/>
            <person name="Eisen J.A."/>
            <person name="Gill S.R."/>
            <person name="Holtzapple E.K."/>
            <person name="Okstad O.A."/>
            <person name="Helgason E."/>
            <person name="Rilstone J."/>
            <person name="Wu M."/>
            <person name="Kolonay J.F."/>
            <person name="Beanan M.J."/>
            <person name="Dodson R.J."/>
            <person name="Brinkac L.M."/>
            <person name="Gwinn M.L."/>
            <person name="DeBoy R.T."/>
            <person name="Madpu R."/>
            <person name="Daugherty S.C."/>
            <person name="Durkin A.S."/>
            <person name="Haft D.H."/>
            <person name="Nelson W.C."/>
            <person name="Peterson J.D."/>
            <person name="Pop M."/>
            <person name="Khouri H.M."/>
            <person name="Radune D."/>
            <person name="Benton J.L."/>
            <person name="Mahamoud Y."/>
            <person name="Jiang L."/>
            <person name="Hance I.R."/>
            <person name="Weidman J.F."/>
            <person name="Berry K.J."/>
            <person name="Plaut R.D."/>
            <person name="Wolf A.M."/>
            <person name="Watkins K.L."/>
            <person name="Nierman W.C."/>
            <person name="Hazen A."/>
            <person name="Cline R.T."/>
            <person name="Redmond C."/>
            <person name="Thwaite J.E."/>
            <person name="White O."/>
            <person name="Salzberg S.L."/>
            <person name="Thomason B."/>
            <person name="Friedlander A.M."/>
            <person name="Koehler T.M."/>
            <person name="Hanna P.C."/>
            <person name="Kolstoe A.-B."/>
            <person name="Fraser C.M."/>
        </authorList>
    </citation>
    <scope>NUCLEOTIDE SEQUENCE [LARGE SCALE GENOMIC DNA]</scope>
    <source>
        <strain>Ames / isolate Porton</strain>
    </source>
</reference>
<reference key="2">
    <citation type="journal article" date="2009" name="J. Bacteriol.">
        <title>The complete genome sequence of Bacillus anthracis Ames 'Ancestor'.</title>
        <authorList>
            <person name="Ravel J."/>
            <person name="Jiang L."/>
            <person name="Stanley S.T."/>
            <person name="Wilson M.R."/>
            <person name="Decker R.S."/>
            <person name="Read T.D."/>
            <person name="Worsham P."/>
            <person name="Keim P.S."/>
            <person name="Salzberg S.L."/>
            <person name="Fraser-Liggett C.M."/>
            <person name="Rasko D.A."/>
        </authorList>
    </citation>
    <scope>NUCLEOTIDE SEQUENCE [LARGE SCALE GENOMIC DNA]</scope>
    <source>
        <strain>Ames ancestor</strain>
    </source>
</reference>
<reference key="3">
    <citation type="submission" date="2004-01" db="EMBL/GenBank/DDBJ databases">
        <title>Complete genome sequence of Bacillus anthracis Sterne.</title>
        <authorList>
            <person name="Brettin T.S."/>
            <person name="Bruce D."/>
            <person name="Challacombe J.F."/>
            <person name="Gilna P."/>
            <person name="Han C."/>
            <person name="Hill K."/>
            <person name="Hitchcock P."/>
            <person name="Jackson P."/>
            <person name="Keim P."/>
            <person name="Longmire J."/>
            <person name="Lucas S."/>
            <person name="Okinaka R."/>
            <person name="Richardson P."/>
            <person name="Rubin E."/>
            <person name="Tice H."/>
        </authorList>
    </citation>
    <scope>NUCLEOTIDE SEQUENCE [LARGE SCALE GENOMIC DNA]</scope>
    <source>
        <strain>Sterne</strain>
    </source>
</reference>